<gene>
    <name evidence="1" type="primary">rimM</name>
    <name type="ordered locus">ECS88_2794</name>
</gene>
<evidence type="ECO:0000255" key="1">
    <source>
        <dbReference type="HAMAP-Rule" id="MF_00014"/>
    </source>
</evidence>
<name>RIMM_ECO45</name>
<protein>
    <recommendedName>
        <fullName evidence="1">Ribosome maturation factor RimM</fullName>
    </recommendedName>
</protein>
<keyword id="KW-0143">Chaperone</keyword>
<keyword id="KW-0963">Cytoplasm</keyword>
<keyword id="KW-1185">Reference proteome</keyword>
<keyword id="KW-0690">Ribosome biogenesis</keyword>
<keyword id="KW-0698">rRNA processing</keyword>
<reference key="1">
    <citation type="journal article" date="2009" name="PLoS Genet.">
        <title>Organised genome dynamics in the Escherichia coli species results in highly diverse adaptive paths.</title>
        <authorList>
            <person name="Touchon M."/>
            <person name="Hoede C."/>
            <person name="Tenaillon O."/>
            <person name="Barbe V."/>
            <person name="Baeriswyl S."/>
            <person name="Bidet P."/>
            <person name="Bingen E."/>
            <person name="Bonacorsi S."/>
            <person name="Bouchier C."/>
            <person name="Bouvet O."/>
            <person name="Calteau A."/>
            <person name="Chiapello H."/>
            <person name="Clermont O."/>
            <person name="Cruveiller S."/>
            <person name="Danchin A."/>
            <person name="Diard M."/>
            <person name="Dossat C."/>
            <person name="Karoui M.E."/>
            <person name="Frapy E."/>
            <person name="Garry L."/>
            <person name="Ghigo J.M."/>
            <person name="Gilles A.M."/>
            <person name="Johnson J."/>
            <person name="Le Bouguenec C."/>
            <person name="Lescat M."/>
            <person name="Mangenot S."/>
            <person name="Martinez-Jehanne V."/>
            <person name="Matic I."/>
            <person name="Nassif X."/>
            <person name="Oztas S."/>
            <person name="Petit M.A."/>
            <person name="Pichon C."/>
            <person name="Rouy Z."/>
            <person name="Ruf C.S."/>
            <person name="Schneider D."/>
            <person name="Tourret J."/>
            <person name="Vacherie B."/>
            <person name="Vallenet D."/>
            <person name="Medigue C."/>
            <person name="Rocha E.P.C."/>
            <person name="Denamur E."/>
        </authorList>
    </citation>
    <scope>NUCLEOTIDE SEQUENCE [LARGE SCALE GENOMIC DNA]</scope>
    <source>
        <strain>S88 / ExPEC</strain>
    </source>
</reference>
<comment type="function">
    <text evidence="1">An accessory protein needed during the final step in the assembly of 30S ribosomal subunit, possibly for assembly of the head region. Essential for efficient processing of 16S rRNA. May be needed both before and after RbfA during the maturation of 16S rRNA. It has affinity for free ribosomal 30S subunits but not for 70S ribosomes.</text>
</comment>
<comment type="subunit">
    <text evidence="1">Binds ribosomal protein uS19.</text>
</comment>
<comment type="subcellular location">
    <subcellularLocation>
        <location evidence="1">Cytoplasm</location>
    </subcellularLocation>
</comment>
<comment type="domain">
    <text evidence="1">The PRC barrel domain binds ribosomal protein uS19.</text>
</comment>
<comment type="similarity">
    <text evidence="1">Belongs to the RimM family.</text>
</comment>
<dbReference type="EMBL" id="CU928161">
    <property type="protein sequence ID" value="CAR04048.1"/>
    <property type="molecule type" value="Genomic_DNA"/>
</dbReference>
<dbReference type="RefSeq" id="WP_000043335.1">
    <property type="nucleotide sequence ID" value="NC_011742.1"/>
</dbReference>
<dbReference type="SMR" id="B7MIU6"/>
<dbReference type="GeneID" id="93774458"/>
<dbReference type="KEGG" id="ecz:ECS88_2794"/>
<dbReference type="HOGENOM" id="CLU_077636_1_0_6"/>
<dbReference type="Proteomes" id="UP000000747">
    <property type="component" value="Chromosome"/>
</dbReference>
<dbReference type="GO" id="GO:0005737">
    <property type="term" value="C:cytoplasm"/>
    <property type="evidence" value="ECO:0007669"/>
    <property type="project" value="UniProtKB-SubCell"/>
</dbReference>
<dbReference type="GO" id="GO:0005840">
    <property type="term" value="C:ribosome"/>
    <property type="evidence" value="ECO:0007669"/>
    <property type="project" value="InterPro"/>
</dbReference>
<dbReference type="GO" id="GO:0043022">
    <property type="term" value="F:ribosome binding"/>
    <property type="evidence" value="ECO:0007669"/>
    <property type="project" value="InterPro"/>
</dbReference>
<dbReference type="GO" id="GO:0042274">
    <property type="term" value="P:ribosomal small subunit biogenesis"/>
    <property type="evidence" value="ECO:0007669"/>
    <property type="project" value="UniProtKB-UniRule"/>
</dbReference>
<dbReference type="GO" id="GO:0006364">
    <property type="term" value="P:rRNA processing"/>
    <property type="evidence" value="ECO:0007669"/>
    <property type="project" value="UniProtKB-UniRule"/>
</dbReference>
<dbReference type="FunFam" id="2.30.30.240:FF:000001">
    <property type="entry name" value="Ribosome maturation factor RimM"/>
    <property type="match status" value="1"/>
</dbReference>
<dbReference type="FunFam" id="2.40.30.60:FF:000001">
    <property type="entry name" value="Ribosome maturation factor RimM"/>
    <property type="match status" value="1"/>
</dbReference>
<dbReference type="Gene3D" id="2.30.30.240">
    <property type="entry name" value="PRC-barrel domain"/>
    <property type="match status" value="1"/>
</dbReference>
<dbReference type="Gene3D" id="2.40.30.60">
    <property type="entry name" value="RimM"/>
    <property type="match status" value="1"/>
</dbReference>
<dbReference type="HAMAP" id="MF_00014">
    <property type="entry name" value="Ribosome_mat_RimM"/>
    <property type="match status" value="1"/>
</dbReference>
<dbReference type="InterPro" id="IPR011033">
    <property type="entry name" value="PRC_barrel-like_sf"/>
</dbReference>
<dbReference type="InterPro" id="IPR056792">
    <property type="entry name" value="PRC_RimM"/>
</dbReference>
<dbReference type="InterPro" id="IPR011961">
    <property type="entry name" value="RimM"/>
</dbReference>
<dbReference type="InterPro" id="IPR002676">
    <property type="entry name" value="RimM_N"/>
</dbReference>
<dbReference type="InterPro" id="IPR036976">
    <property type="entry name" value="RimM_N_sf"/>
</dbReference>
<dbReference type="InterPro" id="IPR009000">
    <property type="entry name" value="Transl_B-barrel_sf"/>
</dbReference>
<dbReference type="NCBIfam" id="TIGR02273">
    <property type="entry name" value="16S_RimM"/>
    <property type="match status" value="1"/>
</dbReference>
<dbReference type="PANTHER" id="PTHR33692">
    <property type="entry name" value="RIBOSOME MATURATION FACTOR RIMM"/>
    <property type="match status" value="1"/>
</dbReference>
<dbReference type="PANTHER" id="PTHR33692:SF1">
    <property type="entry name" value="RIBOSOME MATURATION FACTOR RIMM"/>
    <property type="match status" value="1"/>
</dbReference>
<dbReference type="Pfam" id="PF24986">
    <property type="entry name" value="PRC_RimM"/>
    <property type="match status" value="1"/>
</dbReference>
<dbReference type="Pfam" id="PF01782">
    <property type="entry name" value="RimM"/>
    <property type="match status" value="1"/>
</dbReference>
<dbReference type="SUPFAM" id="SSF50346">
    <property type="entry name" value="PRC-barrel domain"/>
    <property type="match status" value="1"/>
</dbReference>
<dbReference type="SUPFAM" id="SSF50447">
    <property type="entry name" value="Translation proteins"/>
    <property type="match status" value="1"/>
</dbReference>
<organism>
    <name type="scientific">Escherichia coli O45:K1 (strain S88 / ExPEC)</name>
    <dbReference type="NCBI Taxonomy" id="585035"/>
    <lineage>
        <taxon>Bacteria</taxon>
        <taxon>Pseudomonadati</taxon>
        <taxon>Pseudomonadota</taxon>
        <taxon>Gammaproteobacteria</taxon>
        <taxon>Enterobacterales</taxon>
        <taxon>Enterobacteriaceae</taxon>
        <taxon>Escherichia</taxon>
    </lineage>
</organism>
<sequence length="182" mass="20605">MSKQLTAQAPVDPIVLGKMGSSYGIRGWLRVFSSTEDAESIFDYQPWFIQKAGQWQQVQLESWKHHNQDMIIKLKGVDDRDAANLLTNCEIVVDSSQLPQLEEGDYYWKDLMGCQVVTTEGYDLGKVVDMMETGSNDVLVIKANLKDAFGIKERLVPFLDGQVIKKVDLTTRSIEVDWDPGF</sequence>
<proteinExistence type="inferred from homology"/>
<feature type="chain" id="PRO_1000196559" description="Ribosome maturation factor RimM">
    <location>
        <begin position="1"/>
        <end position="182"/>
    </location>
</feature>
<feature type="domain" description="PRC barrel" evidence="1">
    <location>
        <begin position="102"/>
        <end position="182"/>
    </location>
</feature>
<accession>B7MIU6</accession>